<comment type="similarity">
    <text evidence="1">Belongs to the universal ribosomal protein uS2 family.</text>
</comment>
<sequence length="255" mass="28447">MAVISMKQLLECGVHFGHQTRRWNPKMAKYIFTERNGIHVIDLQQTVKLADQAYEFVRDAAANDAVILFVGTKKQAAEAVADEATRAGQYFINHRWLGGTLTNWGTIQKRIARLKEIKRMEEEGTFDVLPKKEVALLNKQRARLEKFLGGIEDMPRIPDVMYVVDPHKEQIAVKEAKKLGIPVVAMVDTNADPDDIDIIIPANDDAIRAVKLITAKLADAIIEGRQGEDADIAFEADTQADSIEEIVEVVEGDNA</sequence>
<dbReference type="EMBL" id="CP000829">
    <property type="protein sequence ID" value="ACI61984.1"/>
    <property type="molecule type" value="Genomic_DNA"/>
</dbReference>
<dbReference type="SMR" id="B5XIY5"/>
<dbReference type="KEGG" id="soz:Spy49_1733"/>
<dbReference type="HOGENOM" id="CLU_040318_1_2_9"/>
<dbReference type="Proteomes" id="UP000001039">
    <property type="component" value="Chromosome"/>
</dbReference>
<dbReference type="GO" id="GO:0022627">
    <property type="term" value="C:cytosolic small ribosomal subunit"/>
    <property type="evidence" value="ECO:0007669"/>
    <property type="project" value="TreeGrafter"/>
</dbReference>
<dbReference type="GO" id="GO:0003735">
    <property type="term" value="F:structural constituent of ribosome"/>
    <property type="evidence" value="ECO:0007669"/>
    <property type="project" value="InterPro"/>
</dbReference>
<dbReference type="GO" id="GO:0006412">
    <property type="term" value="P:translation"/>
    <property type="evidence" value="ECO:0007669"/>
    <property type="project" value="UniProtKB-UniRule"/>
</dbReference>
<dbReference type="CDD" id="cd01425">
    <property type="entry name" value="RPS2"/>
    <property type="match status" value="1"/>
</dbReference>
<dbReference type="FunFam" id="1.10.287.610:FF:000001">
    <property type="entry name" value="30S ribosomal protein S2"/>
    <property type="match status" value="1"/>
</dbReference>
<dbReference type="Gene3D" id="3.40.50.10490">
    <property type="entry name" value="Glucose-6-phosphate isomerase like protein, domain 1"/>
    <property type="match status" value="1"/>
</dbReference>
<dbReference type="Gene3D" id="1.10.287.610">
    <property type="entry name" value="Helix hairpin bin"/>
    <property type="match status" value="1"/>
</dbReference>
<dbReference type="HAMAP" id="MF_00291_B">
    <property type="entry name" value="Ribosomal_uS2_B"/>
    <property type="match status" value="1"/>
</dbReference>
<dbReference type="InterPro" id="IPR001865">
    <property type="entry name" value="Ribosomal_uS2"/>
</dbReference>
<dbReference type="InterPro" id="IPR005706">
    <property type="entry name" value="Ribosomal_uS2_bac/mit/plastid"/>
</dbReference>
<dbReference type="InterPro" id="IPR018130">
    <property type="entry name" value="Ribosomal_uS2_CS"/>
</dbReference>
<dbReference type="InterPro" id="IPR023591">
    <property type="entry name" value="Ribosomal_uS2_flav_dom_sf"/>
</dbReference>
<dbReference type="NCBIfam" id="TIGR01011">
    <property type="entry name" value="rpsB_bact"/>
    <property type="match status" value="1"/>
</dbReference>
<dbReference type="PANTHER" id="PTHR12534">
    <property type="entry name" value="30S RIBOSOMAL PROTEIN S2 PROKARYOTIC AND ORGANELLAR"/>
    <property type="match status" value="1"/>
</dbReference>
<dbReference type="PANTHER" id="PTHR12534:SF0">
    <property type="entry name" value="SMALL RIBOSOMAL SUBUNIT PROTEIN US2M"/>
    <property type="match status" value="1"/>
</dbReference>
<dbReference type="Pfam" id="PF00318">
    <property type="entry name" value="Ribosomal_S2"/>
    <property type="match status" value="1"/>
</dbReference>
<dbReference type="PRINTS" id="PR00395">
    <property type="entry name" value="RIBOSOMALS2"/>
</dbReference>
<dbReference type="SUPFAM" id="SSF52313">
    <property type="entry name" value="Ribosomal protein S2"/>
    <property type="match status" value="1"/>
</dbReference>
<dbReference type="PROSITE" id="PS00962">
    <property type="entry name" value="RIBOSOMAL_S2_1"/>
    <property type="match status" value="1"/>
</dbReference>
<gene>
    <name evidence="1" type="primary">rpsB</name>
    <name type="ordered locus">Spy49_1733</name>
</gene>
<proteinExistence type="inferred from homology"/>
<name>RS2_STRPZ</name>
<keyword id="KW-0687">Ribonucleoprotein</keyword>
<keyword id="KW-0689">Ribosomal protein</keyword>
<reference key="1">
    <citation type="journal article" date="2008" name="J. Bacteriol.">
        <title>Genome sequence of a nephritogenic and highly transformable M49 strain of Streptococcus pyogenes.</title>
        <authorList>
            <person name="McShan W.M."/>
            <person name="Ferretti J.J."/>
            <person name="Karasawa T."/>
            <person name="Suvorov A.N."/>
            <person name="Lin S."/>
            <person name="Qin B."/>
            <person name="Jia H."/>
            <person name="Kenton S."/>
            <person name="Najar F."/>
            <person name="Wu H."/>
            <person name="Scott J."/>
            <person name="Roe B.A."/>
            <person name="Savic D.J."/>
        </authorList>
    </citation>
    <scope>NUCLEOTIDE SEQUENCE [LARGE SCALE GENOMIC DNA]</scope>
    <source>
        <strain>NZ131</strain>
    </source>
</reference>
<feature type="chain" id="PRO_1000115065" description="Small ribosomal subunit protein uS2">
    <location>
        <begin position="1"/>
        <end position="255"/>
    </location>
</feature>
<protein>
    <recommendedName>
        <fullName evidence="1">Small ribosomal subunit protein uS2</fullName>
    </recommendedName>
    <alternativeName>
        <fullName evidence="2">30S ribosomal protein S2</fullName>
    </alternativeName>
</protein>
<organism>
    <name type="scientific">Streptococcus pyogenes serotype M49 (strain NZ131)</name>
    <dbReference type="NCBI Taxonomy" id="471876"/>
    <lineage>
        <taxon>Bacteria</taxon>
        <taxon>Bacillati</taxon>
        <taxon>Bacillota</taxon>
        <taxon>Bacilli</taxon>
        <taxon>Lactobacillales</taxon>
        <taxon>Streptococcaceae</taxon>
        <taxon>Streptococcus</taxon>
    </lineage>
</organism>
<evidence type="ECO:0000255" key="1">
    <source>
        <dbReference type="HAMAP-Rule" id="MF_00291"/>
    </source>
</evidence>
<evidence type="ECO:0000305" key="2"/>
<accession>B5XIY5</accession>